<reference key="1">
    <citation type="journal article" date="2007" name="J. Bacteriol.">
        <title>Genome sequence of Avery's virulent serotype 2 strain D39 of Streptococcus pneumoniae and comparison with that of unencapsulated laboratory strain R6.</title>
        <authorList>
            <person name="Lanie J.A."/>
            <person name="Ng W.-L."/>
            <person name="Kazmierczak K.M."/>
            <person name="Andrzejewski T.M."/>
            <person name="Davidsen T.M."/>
            <person name="Wayne K.J."/>
            <person name="Tettelin H."/>
            <person name="Glass J.I."/>
            <person name="Winkler M.E."/>
        </authorList>
    </citation>
    <scope>NUCLEOTIDE SEQUENCE [LARGE SCALE GENOMIC DNA]</scope>
    <source>
        <strain>D39 / NCTC 7466</strain>
    </source>
</reference>
<gene>
    <name evidence="1" type="primary">metE</name>
    <name type="ordered locus">SPD_0510</name>
</gene>
<protein>
    <recommendedName>
        <fullName evidence="1">5-methyltetrahydropteroyltriglutamate--homocysteine methyltransferase</fullName>
        <ecNumber evidence="1">2.1.1.14</ecNumber>
    </recommendedName>
    <alternativeName>
        <fullName evidence="1">Cobalamin-independent methionine synthase</fullName>
    </alternativeName>
    <alternativeName>
        <fullName evidence="1">Methionine synthase, vitamin-B12 independent isozyme</fullName>
    </alternativeName>
</protein>
<comment type="function">
    <text evidence="1">Catalyzes the transfer of a methyl group from 5-methyltetrahydrofolate to homocysteine resulting in methionine formation.</text>
</comment>
<comment type="catalytic activity">
    <reaction evidence="1">
        <text>5-methyltetrahydropteroyltri-L-glutamate + L-homocysteine = tetrahydropteroyltri-L-glutamate + L-methionine</text>
        <dbReference type="Rhea" id="RHEA:21196"/>
        <dbReference type="ChEBI" id="CHEBI:57844"/>
        <dbReference type="ChEBI" id="CHEBI:58140"/>
        <dbReference type="ChEBI" id="CHEBI:58199"/>
        <dbReference type="ChEBI" id="CHEBI:58207"/>
        <dbReference type="EC" id="2.1.1.14"/>
    </reaction>
</comment>
<comment type="cofactor">
    <cofactor evidence="1">
        <name>Zn(2+)</name>
        <dbReference type="ChEBI" id="CHEBI:29105"/>
    </cofactor>
    <text evidence="1">Binds 1 zinc ion per subunit.</text>
</comment>
<comment type="pathway">
    <text evidence="1">Amino-acid biosynthesis; L-methionine biosynthesis via de novo pathway; L-methionine from L-homocysteine (MetE route): step 1/1.</text>
</comment>
<comment type="similarity">
    <text evidence="1">Belongs to the vitamin-B12 independent methionine synthase family.</text>
</comment>
<proteinExistence type="inferred from homology"/>
<feature type="chain" id="PRO_1000017283" description="5-methyltetrahydropteroyltriglutamate--homocysteine methyltransferase">
    <location>
        <begin position="1"/>
        <end position="749"/>
    </location>
</feature>
<feature type="active site" description="Proton donor" evidence="1">
    <location>
        <position position="689"/>
    </location>
</feature>
<feature type="binding site" evidence="1">
    <location>
        <begin position="15"/>
        <end position="18"/>
    </location>
    <ligand>
        <name>5-methyltetrahydropteroyltri-L-glutamate</name>
        <dbReference type="ChEBI" id="CHEBI:58207"/>
    </ligand>
</feature>
<feature type="binding site" evidence="1">
    <location>
        <position position="114"/>
    </location>
    <ligand>
        <name>5-methyltetrahydropteroyltri-L-glutamate</name>
        <dbReference type="ChEBI" id="CHEBI:58207"/>
    </ligand>
</feature>
<feature type="binding site" evidence="1">
    <location>
        <begin position="425"/>
        <end position="427"/>
    </location>
    <ligand>
        <name>L-homocysteine</name>
        <dbReference type="ChEBI" id="CHEBI:58199"/>
    </ligand>
</feature>
<feature type="binding site" evidence="1">
    <location>
        <begin position="425"/>
        <end position="427"/>
    </location>
    <ligand>
        <name>L-methionine</name>
        <dbReference type="ChEBI" id="CHEBI:57844"/>
    </ligand>
</feature>
<feature type="binding site" evidence="1">
    <location>
        <position position="478"/>
    </location>
    <ligand>
        <name>L-homocysteine</name>
        <dbReference type="ChEBI" id="CHEBI:58199"/>
    </ligand>
</feature>
<feature type="binding site" evidence="1">
    <location>
        <position position="478"/>
    </location>
    <ligand>
        <name>L-methionine</name>
        <dbReference type="ChEBI" id="CHEBI:57844"/>
    </ligand>
</feature>
<feature type="binding site" evidence="1">
    <location>
        <position position="555"/>
    </location>
    <ligand>
        <name>5-methyltetrahydropteroyltri-L-glutamate</name>
        <dbReference type="ChEBI" id="CHEBI:58207"/>
    </ligand>
</feature>
<feature type="binding site" evidence="1">
    <location>
        <position position="593"/>
    </location>
    <ligand>
        <name>L-homocysteine</name>
        <dbReference type="ChEBI" id="CHEBI:58199"/>
    </ligand>
</feature>
<feature type="binding site" evidence="1">
    <location>
        <position position="593"/>
    </location>
    <ligand>
        <name>L-methionine</name>
        <dbReference type="ChEBI" id="CHEBI:57844"/>
    </ligand>
</feature>
<feature type="binding site" evidence="1">
    <location>
        <position position="599"/>
    </location>
    <ligand>
        <name>5-methyltetrahydropteroyltri-L-glutamate</name>
        <dbReference type="ChEBI" id="CHEBI:58207"/>
    </ligand>
</feature>
<feature type="binding site" evidence="1">
    <location>
        <position position="636"/>
    </location>
    <ligand>
        <name>Zn(2+)</name>
        <dbReference type="ChEBI" id="CHEBI:29105"/>
        <note>catalytic</note>
    </ligand>
</feature>
<feature type="binding site" evidence="1">
    <location>
        <position position="638"/>
    </location>
    <ligand>
        <name>Zn(2+)</name>
        <dbReference type="ChEBI" id="CHEBI:29105"/>
        <note>catalytic</note>
    </ligand>
</feature>
<feature type="binding site" evidence="1">
    <location>
        <position position="660"/>
    </location>
    <ligand>
        <name>Zn(2+)</name>
        <dbReference type="ChEBI" id="CHEBI:29105"/>
        <note>catalytic</note>
    </ligand>
</feature>
<feature type="binding site" evidence="1">
    <location>
        <position position="721"/>
    </location>
    <ligand>
        <name>Zn(2+)</name>
        <dbReference type="ChEBI" id="CHEBI:29105"/>
        <note>catalytic</note>
    </ligand>
</feature>
<dbReference type="EC" id="2.1.1.14" evidence="1"/>
<dbReference type="EMBL" id="CP000410">
    <property type="protein sequence ID" value="ABJ55286.1"/>
    <property type="molecule type" value="Genomic_DNA"/>
</dbReference>
<dbReference type="RefSeq" id="WP_000108190.1">
    <property type="nucleotide sequence ID" value="NZ_JAMLJR010000001.1"/>
</dbReference>
<dbReference type="SMR" id="Q04LT6"/>
<dbReference type="PaxDb" id="373153-SPD_0510"/>
<dbReference type="KEGG" id="spd:SPD_0510"/>
<dbReference type="eggNOG" id="COG0620">
    <property type="taxonomic scope" value="Bacteria"/>
</dbReference>
<dbReference type="HOGENOM" id="CLU_013175_0_0_9"/>
<dbReference type="BioCyc" id="SPNE373153:G1G6V-562-MONOMER"/>
<dbReference type="UniPathway" id="UPA00051">
    <property type="reaction ID" value="UER00082"/>
</dbReference>
<dbReference type="Proteomes" id="UP000001452">
    <property type="component" value="Chromosome"/>
</dbReference>
<dbReference type="GO" id="GO:0003871">
    <property type="term" value="F:5-methyltetrahydropteroyltriglutamate-homocysteine S-methyltransferase activity"/>
    <property type="evidence" value="ECO:0007669"/>
    <property type="project" value="UniProtKB-UniRule"/>
</dbReference>
<dbReference type="GO" id="GO:0008270">
    <property type="term" value="F:zinc ion binding"/>
    <property type="evidence" value="ECO:0007669"/>
    <property type="project" value="InterPro"/>
</dbReference>
<dbReference type="GO" id="GO:0009086">
    <property type="term" value="P:methionine biosynthetic process"/>
    <property type="evidence" value="ECO:0007669"/>
    <property type="project" value="UniProtKB-UniRule"/>
</dbReference>
<dbReference type="GO" id="GO:0032259">
    <property type="term" value="P:methylation"/>
    <property type="evidence" value="ECO:0007669"/>
    <property type="project" value="UniProtKB-KW"/>
</dbReference>
<dbReference type="CDD" id="cd03311">
    <property type="entry name" value="CIMS_C_terminal_like"/>
    <property type="match status" value="1"/>
</dbReference>
<dbReference type="CDD" id="cd03312">
    <property type="entry name" value="CIMS_N_terminal_like"/>
    <property type="match status" value="1"/>
</dbReference>
<dbReference type="Gene3D" id="3.20.20.210">
    <property type="match status" value="2"/>
</dbReference>
<dbReference type="HAMAP" id="MF_00172">
    <property type="entry name" value="Meth_synth"/>
    <property type="match status" value="1"/>
</dbReference>
<dbReference type="InterPro" id="IPR013215">
    <property type="entry name" value="Cbl-indep_Met_Synth_N"/>
</dbReference>
<dbReference type="InterPro" id="IPR006276">
    <property type="entry name" value="Cobalamin-indep_Met_synthase"/>
</dbReference>
<dbReference type="InterPro" id="IPR002629">
    <property type="entry name" value="Met_Synth_C/arc"/>
</dbReference>
<dbReference type="InterPro" id="IPR038071">
    <property type="entry name" value="UROD/MetE-like_sf"/>
</dbReference>
<dbReference type="NCBIfam" id="TIGR01371">
    <property type="entry name" value="met_syn_B12ind"/>
    <property type="match status" value="1"/>
</dbReference>
<dbReference type="NCBIfam" id="NF003556">
    <property type="entry name" value="PRK05222.1"/>
    <property type="match status" value="1"/>
</dbReference>
<dbReference type="PANTHER" id="PTHR30519">
    <property type="entry name" value="5-METHYLTETRAHYDROPTEROYLTRIGLUTAMATE--HOMOCYSTEINE METHYLTRANSFERASE"/>
    <property type="match status" value="1"/>
</dbReference>
<dbReference type="Pfam" id="PF08267">
    <property type="entry name" value="Meth_synt_1"/>
    <property type="match status" value="1"/>
</dbReference>
<dbReference type="Pfam" id="PF01717">
    <property type="entry name" value="Meth_synt_2"/>
    <property type="match status" value="1"/>
</dbReference>
<dbReference type="PIRSF" id="PIRSF000382">
    <property type="entry name" value="MeTrfase_B12_ind"/>
    <property type="match status" value="1"/>
</dbReference>
<dbReference type="SUPFAM" id="SSF51726">
    <property type="entry name" value="UROD/MetE-like"/>
    <property type="match status" value="2"/>
</dbReference>
<sequence>MSTTIIGFPRLGEFRELKFTTEKYFRKEISEEELLAAAKDLRAKHWNIVKEKGITEIPSNDFSHYDNFLDAAFLFNVVPASVQNLDLSDLERYFALGRGYQGEKGDVRALPMKKWFNTNYHYIVPKFEKDTQVKLAGHKIFDEFQEAKELGLNTRPVLVGPFTFLQLSDFEEGVKADDFVDSFVAAYQEVFAKLADLGATRIQLDEAALVKDLTAEEKALFLNLYNKLLADKKGLEVLFQTYFGDVRDVYADLVNLPVDAIGLDFVEGKKTLELVKGGFPADKTLYVGIVNGKNIWRNNYEKSLTVLEQIPAENIVLTSSCSLLHVPFTTANEEFEPALLNHFAFAVEKLDEIRDLDAIRNGQGSEALAANKELFATERVGENAELRARIAGLTDADYTRLPAFAEREAIQEEAFKLPALPTTTIGSFPQTKEVRAKRLAYRKGELSQKEYDAFLAETIDEWIKWQEDIDFDVLVHGEFERNDMVEYFGQNLSGYLFSKNGWVQSYGMRGVKPPIIWGDVTRLNPITVKWSSYAQSRTNKPVKGMLTGPVTILNWSFPREDISIKDSTLQIALAIKDEVLDLEAAGVKIIQIDEAALREKLPLRRSDWYEDYLDWAIPAFRLVHSTVAPDTQIHTHMCYSEFTDIIPAIDNMDADVISFEASRSNLEILDELKAKNFQTEVGPGVYDIHSPRVPNEGEIDNTIEAILAKVPSKKVWINPDCGLKTRGIPETKESLIRLVEAAKAAREKL</sequence>
<keyword id="KW-0028">Amino-acid biosynthesis</keyword>
<keyword id="KW-0479">Metal-binding</keyword>
<keyword id="KW-0486">Methionine biosynthesis</keyword>
<keyword id="KW-0489">Methyltransferase</keyword>
<keyword id="KW-1185">Reference proteome</keyword>
<keyword id="KW-0677">Repeat</keyword>
<keyword id="KW-0808">Transferase</keyword>
<keyword id="KW-0862">Zinc</keyword>
<evidence type="ECO:0000255" key="1">
    <source>
        <dbReference type="HAMAP-Rule" id="MF_00172"/>
    </source>
</evidence>
<organism>
    <name type="scientific">Streptococcus pneumoniae serotype 2 (strain D39 / NCTC 7466)</name>
    <dbReference type="NCBI Taxonomy" id="373153"/>
    <lineage>
        <taxon>Bacteria</taxon>
        <taxon>Bacillati</taxon>
        <taxon>Bacillota</taxon>
        <taxon>Bacilli</taxon>
        <taxon>Lactobacillales</taxon>
        <taxon>Streptococcaceae</taxon>
        <taxon>Streptococcus</taxon>
    </lineage>
</organism>
<name>METE_STRP2</name>
<accession>Q04LT6</accession>